<feature type="chain" id="PRO_0000126248" description="Large ribosomal subunit protein bL36">
    <location>
        <begin position="1"/>
        <end position="41"/>
    </location>
</feature>
<gene>
    <name evidence="1" type="primary">rpmJ</name>
    <name type="ordered locus">RC0682</name>
</gene>
<dbReference type="EMBL" id="AE006914">
    <property type="protein sequence ID" value="AAL03220.1"/>
    <property type="molecule type" value="Genomic_DNA"/>
</dbReference>
<dbReference type="PIR" id="B97785">
    <property type="entry name" value="B97785"/>
</dbReference>
<dbReference type="SMR" id="Q92HT9"/>
<dbReference type="KEGG" id="rco:RC0682"/>
<dbReference type="HOGENOM" id="CLU_135723_3_2_5"/>
<dbReference type="Proteomes" id="UP000000816">
    <property type="component" value="Chromosome"/>
</dbReference>
<dbReference type="GO" id="GO:1990904">
    <property type="term" value="C:ribonucleoprotein complex"/>
    <property type="evidence" value="ECO:0007669"/>
    <property type="project" value="UniProtKB-KW"/>
</dbReference>
<dbReference type="GO" id="GO:0005840">
    <property type="term" value="C:ribosome"/>
    <property type="evidence" value="ECO:0007669"/>
    <property type="project" value="UniProtKB-KW"/>
</dbReference>
<dbReference type="GO" id="GO:0003735">
    <property type="term" value="F:structural constituent of ribosome"/>
    <property type="evidence" value="ECO:0007669"/>
    <property type="project" value="InterPro"/>
</dbReference>
<dbReference type="GO" id="GO:0006412">
    <property type="term" value="P:translation"/>
    <property type="evidence" value="ECO:0007669"/>
    <property type="project" value="UniProtKB-UniRule"/>
</dbReference>
<dbReference type="HAMAP" id="MF_00251">
    <property type="entry name" value="Ribosomal_bL36"/>
    <property type="match status" value="1"/>
</dbReference>
<dbReference type="InterPro" id="IPR000473">
    <property type="entry name" value="Ribosomal_bL36"/>
</dbReference>
<dbReference type="InterPro" id="IPR035977">
    <property type="entry name" value="Ribosomal_bL36_sp"/>
</dbReference>
<dbReference type="InterPro" id="IPR047621">
    <property type="entry name" value="Ribosomal_L36_bact"/>
</dbReference>
<dbReference type="NCBIfam" id="NF002021">
    <property type="entry name" value="PRK00831.1"/>
    <property type="match status" value="1"/>
</dbReference>
<dbReference type="PANTHER" id="PTHR47781">
    <property type="entry name" value="50S RIBOSOMAL PROTEIN L36 2"/>
    <property type="match status" value="1"/>
</dbReference>
<dbReference type="PANTHER" id="PTHR47781:SF1">
    <property type="entry name" value="LARGE RIBOSOMAL SUBUNIT PROTEIN BL36B"/>
    <property type="match status" value="1"/>
</dbReference>
<dbReference type="Pfam" id="PF00444">
    <property type="entry name" value="Ribosomal_L36"/>
    <property type="match status" value="1"/>
</dbReference>
<dbReference type="SUPFAM" id="SSF57840">
    <property type="entry name" value="Ribosomal protein L36"/>
    <property type="match status" value="1"/>
</dbReference>
<dbReference type="PROSITE" id="PS00828">
    <property type="entry name" value="RIBOSOMAL_L36"/>
    <property type="match status" value="1"/>
</dbReference>
<proteinExistence type="inferred from homology"/>
<evidence type="ECO:0000255" key="1">
    <source>
        <dbReference type="HAMAP-Rule" id="MF_00251"/>
    </source>
</evidence>
<evidence type="ECO:0000305" key="2"/>
<name>RL36_RICCN</name>
<comment type="similarity">
    <text evidence="1">Belongs to the bacterial ribosomal protein bL36 family.</text>
</comment>
<reference key="1">
    <citation type="journal article" date="2001" name="Science">
        <title>Mechanisms of evolution in Rickettsia conorii and R. prowazekii.</title>
        <authorList>
            <person name="Ogata H."/>
            <person name="Audic S."/>
            <person name="Renesto-Audiffren P."/>
            <person name="Fournier P.-E."/>
            <person name="Barbe V."/>
            <person name="Samson D."/>
            <person name="Roux V."/>
            <person name="Cossart P."/>
            <person name="Weissenbach J."/>
            <person name="Claverie J.-M."/>
            <person name="Raoult D."/>
        </authorList>
    </citation>
    <scope>NUCLEOTIDE SEQUENCE [LARGE SCALE GENOMIC DNA]</scope>
    <source>
        <strain>ATCC VR-613 / Malish 7</strain>
    </source>
</reference>
<protein>
    <recommendedName>
        <fullName evidence="1">Large ribosomal subunit protein bL36</fullName>
    </recommendedName>
    <alternativeName>
        <fullName evidence="2">50S ribosomal protein L36</fullName>
    </alternativeName>
</protein>
<keyword id="KW-0687">Ribonucleoprotein</keyword>
<keyword id="KW-0689">Ribosomal protein</keyword>
<organism>
    <name type="scientific">Rickettsia conorii (strain ATCC VR-613 / Malish 7)</name>
    <dbReference type="NCBI Taxonomy" id="272944"/>
    <lineage>
        <taxon>Bacteria</taxon>
        <taxon>Pseudomonadati</taxon>
        <taxon>Pseudomonadota</taxon>
        <taxon>Alphaproteobacteria</taxon>
        <taxon>Rickettsiales</taxon>
        <taxon>Rickettsiaceae</taxon>
        <taxon>Rickettsieae</taxon>
        <taxon>Rickettsia</taxon>
        <taxon>spotted fever group</taxon>
    </lineage>
</organism>
<accession>Q92HT9</accession>
<sequence length="41" mass="4833">MKVVSSLKSLKKRDKDCQIVKRRGKIFVINKKNKRFKAKQG</sequence>